<reference key="1">
    <citation type="journal article" date="2005" name="Genome Res.">
        <title>Complete genome sequence of the hyperthermophilic archaeon Thermococcus kodakaraensis KOD1 and comparison with Pyrococcus genomes.</title>
        <authorList>
            <person name="Fukui T."/>
            <person name="Atomi H."/>
            <person name="Kanai T."/>
            <person name="Matsumi R."/>
            <person name="Fujiwara S."/>
            <person name="Imanaka T."/>
        </authorList>
    </citation>
    <scope>NUCLEOTIDE SEQUENCE [LARGE SCALE GENOMIC DNA]</scope>
    <source>
        <strain>ATCC BAA-918 / JCM 12380 / KOD1</strain>
    </source>
</reference>
<reference key="2">
    <citation type="journal article" date="2013" name="Mol. Microbiol.">
        <title>Identification and characterization of an archaeal ketopantoate reductase and its involvement in regulation of coenzyme A biosynthesis.</title>
        <authorList>
            <person name="Tomita H."/>
            <person name="Imanaka T."/>
            <person name="Atomi H."/>
        </authorList>
    </citation>
    <scope>FUNCTION</scope>
    <scope>CATALYTIC ACTIVITY</scope>
    <scope>ACTIVITY REGULATION</scope>
    <scope>BIOPHYSICOCHEMICAL PROPERTIES</scope>
    <scope>PATHWAY</scope>
    <scope>SUBCELLULAR LOCATION</scope>
    <source>
        <strain>ATCC BAA-918 / JCM 12380 / KOD1</strain>
    </source>
</reference>
<name>PANB_THEKO</name>
<protein>
    <recommendedName>
        <fullName evidence="1">3-methyl-2-oxobutanoate hydroxymethyltransferase</fullName>
        <ecNumber evidence="1 2">2.1.2.11</ecNumber>
    </recommendedName>
    <alternativeName>
        <fullName evidence="1 3">Ketopantoate hydroxymethyltransferase</fullName>
        <shortName evidence="1 3">KPHMT</shortName>
    </alternativeName>
</protein>
<dbReference type="EC" id="2.1.2.11" evidence="1 2"/>
<dbReference type="EMBL" id="AP006878">
    <property type="protein sequence ID" value="BAD84552.1"/>
    <property type="molecule type" value="Genomic_DNA"/>
</dbReference>
<dbReference type="RefSeq" id="WP_011249318.1">
    <property type="nucleotide sequence ID" value="NC_006624.1"/>
</dbReference>
<dbReference type="SMR" id="Q5JCY6"/>
<dbReference type="STRING" id="69014.TK0363"/>
<dbReference type="EnsemblBacteria" id="BAD84552">
    <property type="protein sequence ID" value="BAD84552"/>
    <property type="gene ID" value="TK0363"/>
</dbReference>
<dbReference type="GeneID" id="78446868"/>
<dbReference type="KEGG" id="tko:TK0363"/>
<dbReference type="PATRIC" id="fig|69014.16.peg.360"/>
<dbReference type="eggNOG" id="arCOG00584">
    <property type="taxonomic scope" value="Archaea"/>
</dbReference>
<dbReference type="HOGENOM" id="CLU_036645_1_0_2"/>
<dbReference type="InParanoid" id="Q5JCY6"/>
<dbReference type="OrthoDB" id="8414at2157"/>
<dbReference type="PhylomeDB" id="Q5JCY6"/>
<dbReference type="BioCyc" id="MetaCyc:MONOMER-21894"/>
<dbReference type="UniPathway" id="UPA00241"/>
<dbReference type="Proteomes" id="UP000000536">
    <property type="component" value="Chromosome"/>
</dbReference>
<dbReference type="GO" id="GO:0005737">
    <property type="term" value="C:cytoplasm"/>
    <property type="evidence" value="ECO:0007669"/>
    <property type="project" value="UniProtKB-SubCell"/>
</dbReference>
<dbReference type="GO" id="GO:0003864">
    <property type="term" value="F:3-methyl-2-oxobutanoate hydroxymethyltransferase activity"/>
    <property type="evidence" value="ECO:0000318"/>
    <property type="project" value="GO_Central"/>
</dbReference>
<dbReference type="GO" id="GO:0000287">
    <property type="term" value="F:magnesium ion binding"/>
    <property type="evidence" value="ECO:0000318"/>
    <property type="project" value="GO_Central"/>
</dbReference>
<dbReference type="GO" id="GO:0015937">
    <property type="term" value="P:coenzyme A biosynthetic process"/>
    <property type="evidence" value="ECO:0007669"/>
    <property type="project" value="UniProtKB-UniRule"/>
</dbReference>
<dbReference type="GO" id="GO:0015940">
    <property type="term" value="P:pantothenate biosynthetic process"/>
    <property type="evidence" value="ECO:0000318"/>
    <property type="project" value="GO_Central"/>
</dbReference>
<dbReference type="CDD" id="cd06557">
    <property type="entry name" value="KPHMT-like"/>
    <property type="match status" value="1"/>
</dbReference>
<dbReference type="FunFam" id="3.20.20.60:FF:000084">
    <property type="entry name" value="3-methyl-2-oxobutanoate hydroxymethyltransferase"/>
    <property type="match status" value="1"/>
</dbReference>
<dbReference type="Gene3D" id="3.20.20.60">
    <property type="entry name" value="Phosphoenolpyruvate-binding domains"/>
    <property type="match status" value="1"/>
</dbReference>
<dbReference type="HAMAP" id="MF_00156">
    <property type="entry name" value="PanB"/>
    <property type="match status" value="1"/>
</dbReference>
<dbReference type="InterPro" id="IPR003700">
    <property type="entry name" value="Pantoate_hydroxy_MeTrfase"/>
</dbReference>
<dbReference type="InterPro" id="IPR015813">
    <property type="entry name" value="Pyrv/PenolPyrv_kinase-like_dom"/>
</dbReference>
<dbReference type="InterPro" id="IPR040442">
    <property type="entry name" value="Pyrv_kinase-like_dom_sf"/>
</dbReference>
<dbReference type="NCBIfam" id="TIGR00222">
    <property type="entry name" value="panB"/>
    <property type="match status" value="1"/>
</dbReference>
<dbReference type="NCBIfam" id="NF001452">
    <property type="entry name" value="PRK00311.1"/>
    <property type="match status" value="1"/>
</dbReference>
<dbReference type="PANTHER" id="PTHR20881">
    <property type="entry name" value="3-METHYL-2-OXOBUTANOATE HYDROXYMETHYLTRANSFERASE"/>
    <property type="match status" value="1"/>
</dbReference>
<dbReference type="PANTHER" id="PTHR20881:SF0">
    <property type="entry name" value="3-METHYL-2-OXOBUTANOATE HYDROXYMETHYLTRANSFERASE"/>
    <property type="match status" value="1"/>
</dbReference>
<dbReference type="Pfam" id="PF02548">
    <property type="entry name" value="Pantoate_transf"/>
    <property type="match status" value="1"/>
</dbReference>
<dbReference type="PIRSF" id="PIRSF000388">
    <property type="entry name" value="Pantoate_hydroxy_MeTrfase"/>
    <property type="match status" value="1"/>
</dbReference>
<dbReference type="SUPFAM" id="SSF51621">
    <property type="entry name" value="Phosphoenolpyruvate/pyruvate domain"/>
    <property type="match status" value="1"/>
</dbReference>
<gene>
    <name evidence="1" type="primary">panB</name>
    <name type="ordered locus">TK0363</name>
</gene>
<sequence length="284" mass="31743">MREITPRKIIEMKGKEKIAMVTAYDYPSALLADKAGMDIVFVGDSLGMVVYGEPNTLNVSMEQMVFHTRAVAKAVKRALVLADMPFGSYEVSVEEGVKNAMRLIRAGADAVKIEGGYDHKKLVKKLVRMGIPVMGHTGLTPQRYLRLGGYRLMGETEEEIEEILRDAKALEKAGAFAVVLEFVLADVAKLVTEEVSIPTIGIGAGPHVDGQVLVWHDLLGIYENVPPFVKKYADLASIIQLALENYRGEVKEGRFPAKEHYWEFLDKDDFERKKMKALERLEDE</sequence>
<keyword id="KW-0173">Coenzyme A biosynthesis</keyword>
<keyword id="KW-0963">Cytoplasm</keyword>
<keyword id="KW-0460">Magnesium</keyword>
<keyword id="KW-0479">Metal-binding</keyword>
<keyword id="KW-1185">Reference proteome</keyword>
<keyword id="KW-0808">Transferase</keyword>
<comment type="function">
    <text evidence="1 2">Catalyzes the reversible reaction in which hydroxymethyl group from 5,10-methylenetetrahydrofolate is transferred onto alpha-ketoisovalerate to form ketopantoate.</text>
</comment>
<comment type="catalytic activity">
    <reaction evidence="1 2">
        <text>3-methyl-2-oxobutanoate + (6R)-5,10-methylene-5,6,7,8-tetrahydrofolate + H2O = 2-dehydropantoate + (6S)-5,6,7,8-tetrahydrofolate</text>
        <dbReference type="Rhea" id="RHEA:11824"/>
        <dbReference type="ChEBI" id="CHEBI:11561"/>
        <dbReference type="ChEBI" id="CHEBI:11851"/>
        <dbReference type="ChEBI" id="CHEBI:15377"/>
        <dbReference type="ChEBI" id="CHEBI:15636"/>
        <dbReference type="ChEBI" id="CHEBI:57453"/>
        <dbReference type="EC" id="2.1.2.11"/>
    </reaction>
</comment>
<comment type="cofactor">
    <cofactor evidence="1">
        <name>Mg(2+)</name>
        <dbReference type="ChEBI" id="CHEBI:18420"/>
    </cofactor>
    <text evidence="1">Binds 1 Mg(2+) ion per subunit.</text>
</comment>
<comment type="activity regulation">
    <text evidence="2">Neither activated nor inhibited by coenzyme A.</text>
</comment>
<comment type="biophysicochemical properties">
    <kinetics>
        <KM evidence="2">4.73 mM for 3-methyl-2-oxobutanoate</KM>
        <text evidence="2">kcat is 0.76 sec(-1).</text>
    </kinetics>
</comment>
<comment type="pathway">
    <text evidence="1 4">Cofactor biosynthesis; coenzyme A biosynthesis.</text>
</comment>
<comment type="subunit">
    <text evidence="1">Homodecamer; pentamer of dimers.</text>
</comment>
<comment type="subcellular location">
    <subcellularLocation>
        <location evidence="1 4">Cytoplasm</location>
    </subcellularLocation>
</comment>
<comment type="similarity">
    <text evidence="1">Belongs to the PanB family.</text>
</comment>
<feature type="chain" id="PRO_0000184921" description="3-methyl-2-oxobutanoate hydroxymethyltransferase">
    <location>
        <begin position="1"/>
        <end position="284"/>
    </location>
</feature>
<feature type="active site" description="Proton acceptor" evidence="1">
    <location>
        <position position="181"/>
    </location>
</feature>
<feature type="binding site" evidence="1">
    <location>
        <begin position="44"/>
        <end position="45"/>
    </location>
    <ligand>
        <name>3-methyl-2-oxobutanoate</name>
        <dbReference type="ChEBI" id="CHEBI:11851"/>
    </ligand>
</feature>
<feature type="binding site" evidence="1">
    <location>
        <position position="44"/>
    </location>
    <ligand>
        <name>Mg(2+)</name>
        <dbReference type="ChEBI" id="CHEBI:18420"/>
    </ligand>
</feature>
<feature type="binding site" evidence="1">
    <location>
        <position position="83"/>
    </location>
    <ligand>
        <name>3-methyl-2-oxobutanoate</name>
        <dbReference type="ChEBI" id="CHEBI:11851"/>
    </ligand>
</feature>
<feature type="binding site" evidence="1">
    <location>
        <position position="83"/>
    </location>
    <ligand>
        <name>Mg(2+)</name>
        <dbReference type="ChEBI" id="CHEBI:18420"/>
    </ligand>
</feature>
<feature type="binding site" evidence="1">
    <location>
        <position position="112"/>
    </location>
    <ligand>
        <name>3-methyl-2-oxobutanoate</name>
        <dbReference type="ChEBI" id="CHEBI:11851"/>
    </ligand>
</feature>
<feature type="binding site" evidence="1">
    <location>
        <position position="114"/>
    </location>
    <ligand>
        <name>Mg(2+)</name>
        <dbReference type="ChEBI" id="CHEBI:18420"/>
    </ligand>
</feature>
<accession>Q5JCY6</accession>
<evidence type="ECO:0000255" key="1">
    <source>
        <dbReference type="HAMAP-Rule" id="MF_00156"/>
    </source>
</evidence>
<evidence type="ECO:0000269" key="2">
    <source>
    </source>
</evidence>
<evidence type="ECO:0000303" key="3">
    <source>
    </source>
</evidence>
<evidence type="ECO:0000305" key="4">
    <source>
    </source>
</evidence>
<organism>
    <name type="scientific">Thermococcus kodakarensis (strain ATCC BAA-918 / JCM 12380 / KOD1)</name>
    <name type="common">Pyrococcus kodakaraensis (strain KOD1)</name>
    <dbReference type="NCBI Taxonomy" id="69014"/>
    <lineage>
        <taxon>Archaea</taxon>
        <taxon>Methanobacteriati</taxon>
        <taxon>Methanobacteriota</taxon>
        <taxon>Thermococci</taxon>
        <taxon>Thermococcales</taxon>
        <taxon>Thermococcaceae</taxon>
        <taxon>Thermococcus</taxon>
    </lineage>
</organism>
<proteinExistence type="evidence at protein level"/>